<reference key="1">
    <citation type="submission" date="2003-11" db="EMBL/GenBank/DDBJ databases">
        <title>Whole genome sequence of Porphyra yezoensis chloroplast.</title>
        <authorList>
            <person name="Kunimoto M."/>
            <person name="Morishima K."/>
            <person name="Yoshikawa M."/>
            <person name="Fukuda S."/>
            <person name="Kobayashi T."/>
            <person name="Kobayashi M."/>
            <person name="Okazaki T."/>
            <person name="Ohara I."/>
            <person name="Nakayama I."/>
        </authorList>
    </citation>
    <scope>NUCLEOTIDE SEQUENCE [LARGE SCALE GENOMIC DNA]</scope>
    <source>
        <strain>U-51</strain>
    </source>
</reference>
<geneLocation type="chloroplast"/>
<name>YCF26_PYRYE</name>
<sequence>MFSSSILTIISSIDNFITIIVNNLKKWWSDITLQTRIMAMTTLMVSLLMSSLPSGLKLISKQETRLVDNRFGKDLSLLLAVNITPILEGNNYLQLQQFIEHFYLSTSSIRYILVFNAEGQIYYSIPFSSETVVNLFSLSDYECLRSEIYYFSNTPIVNTPNHLEGEIIDIIIPLNKEKKLLGVLNIGINSNPTLTTSSQLTRDVSVAVFVSIWLMVILGAAFNAFTITKPIRELLTGVKNIASGDFHQRISLPFGGELGALIFNFNEMAERLEKYEQQNVEKLTSEKAKLETLVSTIADGAILLDKDLRVILVNRTAIENFGWEGKDIAGSMIIDYLPEDINQQLFPALNDIVRKNFLEQSLCETQEICIKLQKNYKKTFRVLLTTVLDYKYSILKGIAITIQDRTEEVELNEVKNQFISNVSHELRTPLFNIRSFLETLYEYHDSLDNRQKLEFLAIANKETERLTRLVNDVLDLSRLESDQEYPLQSMDLVSAIEQTVRTYQLSAKDKKIDLHIDIEENLPCILGNYSLVLQILANLIGNSLKFTHSDGIIVLRTYRINDSASKLNSTPLQIQKVRVEICDTGIGISKKNQERIFARFLRIENYVHTLEGTGLGLSIVKNIIQKHNSEIHLYSELKNGSCFFFDLIIAKDT</sequence>
<feature type="chain" id="PRO_0000277348" description="Uncharacterized sensor-like histidine kinase ycf26">
    <location>
        <begin position="1"/>
        <end position="653"/>
    </location>
</feature>
<feature type="transmembrane region" description="Helical" evidence="1">
    <location>
        <begin position="39"/>
        <end position="59"/>
    </location>
</feature>
<feature type="transmembrane region" description="Helical" evidence="1">
    <location>
        <begin position="207"/>
        <end position="227"/>
    </location>
</feature>
<feature type="domain" description="HAMP" evidence="2">
    <location>
        <begin position="225"/>
        <end position="277"/>
    </location>
</feature>
<feature type="domain" description="PAS" evidence="4">
    <location>
        <begin position="286"/>
        <end position="356"/>
    </location>
</feature>
<feature type="domain" description="Histidine kinase" evidence="3">
    <location>
        <begin position="421"/>
        <end position="651"/>
    </location>
</feature>
<feature type="modified residue" description="Phosphohistidine; by autocatalysis" evidence="3">
    <location>
        <position position="424"/>
    </location>
</feature>
<keyword id="KW-0067">ATP-binding</keyword>
<keyword id="KW-0150">Chloroplast</keyword>
<keyword id="KW-0418">Kinase</keyword>
<keyword id="KW-0472">Membrane</keyword>
<keyword id="KW-0547">Nucleotide-binding</keyword>
<keyword id="KW-0597">Phosphoprotein</keyword>
<keyword id="KW-0934">Plastid</keyword>
<keyword id="KW-0808">Transferase</keyword>
<keyword id="KW-0812">Transmembrane</keyword>
<keyword id="KW-1133">Transmembrane helix</keyword>
<keyword id="KW-0902">Two-component regulatory system</keyword>
<evidence type="ECO:0000255" key="1"/>
<evidence type="ECO:0000255" key="2">
    <source>
        <dbReference type="PROSITE-ProRule" id="PRU00102"/>
    </source>
</evidence>
<evidence type="ECO:0000255" key="3">
    <source>
        <dbReference type="PROSITE-ProRule" id="PRU00107"/>
    </source>
</evidence>
<evidence type="ECO:0000255" key="4">
    <source>
        <dbReference type="PROSITE-ProRule" id="PRU00140"/>
    </source>
</evidence>
<evidence type="ECO:0000305" key="5"/>
<protein>
    <recommendedName>
        <fullName>Uncharacterized sensor-like histidine kinase ycf26</fullName>
        <ecNumber>2.7.13.3</ecNumber>
    </recommendedName>
</protein>
<comment type="catalytic activity">
    <reaction>
        <text>ATP + protein L-histidine = ADP + protein N-phospho-L-histidine.</text>
        <dbReference type="EC" id="2.7.13.3"/>
    </reaction>
</comment>
<comment type="subcellular location">
    <subcellularLocation>
        <location evidence="5">Plastid</location>
        <location evidence="5">Chloroplast membrane</location>
        <topology evidence="5">Multi-pass membrane protein</topology>
    </subcellularLocation>
</comment>
<organism>
    <name type="scientific">Pyropia yezoensis</name>
    <name type="common">Susabi-nori</name>
    <name type="synonym">Porphyra yezoensis</name>
    <dbReference type="NCBI Taxonomy" id="2788"/>
    <lineage>
        <taxon>Eukaryota</taxon>
        <taxon>Rhodophyta</taxon>
        <taxon>Bangiophyceae</taxon>
        <taxon>Bangiales</taxon>
        <taxon>Bangiaceae</taxon>
        <taxon>Pyropia</taxon>
    </lineage>
</organism>
<accession>Q1XD95</accession>
<gene>
    <name type="primary">ycf26</name>
</gene>
<proteinExistence type="inferred from homology"/>
<dbReference type="EC" id="2.7.13.3"/>
<dbReference type="EMBL" id="AP006715">
    <property type="protein sequence ID" value="BAE92516.1"/>
    <property type="molecule type" value="Genomic_DNA"/>
</dbReference>
<dbReference type="RefSeq" id="YP_537073.1">
    <property type="nucleotide sequence ID" value="NC_007932.1"/>
</dbReference>
<dbReference type="SMR" id="Q1XD95"/>
<dbReference type="GO" id="GO:0031969">
    <property type="term" value="C:chloroplast membrane"/>
    <property type="evidence" value="ECO:0007669"/>
    <property type="project" value="UniProtKB-SubCell"/>
</dbReference>
<dbReference type="GO" id="GO:0005524">
    <property type="term" value="F:ATP binding"/>
    <property type="evidence" value="ECO:0007669"/>
    <property type="project" value="UniProtKB-KW"/>
</dbReference>
<dbReference type="GO" id="GO:0000155">
    <property type="term" value="F:phosphorelay sensor kinase activity"/>
    <property type="evidence" value="ECO:0007669"/>
    <property type="project" value="InterPro"/>
</dbReference>
<dbReference type="GO" id="GO:0006355">
    <property type="term" value="P:regulation of DNA-templated transcription"/>
    <property type="evidence" value="ECO:0007669"/>
    <property type="project" value="InterPro"/>
</dbReference>
<dbReference type="CDD" id="cd06225">
    <property type="entry name" value="HAMP"/>
    <property type="match status" value="1"/>
</dbReference>
<dbReference type="CDD" id="cd00082">
    <property type="entry name" value="HisKA"/>
    <property type="match status" value="1"/>
</dbReference>
<dbReference type="CDD" id="cd00130">
    <property type="entry name" value="PAS"/>
    <property type="match status" value="1"/>
</dbReference>
<dbReference type="FunFam" id="1.10.287.130:FF:000001">
    <property type="entry name" value="Two-component sensor histidine kinase"/>
    <property type="match status" value="1"/>
</dbReference>
<dbReference type="Gene3D" id="1.10.287.130">
    <property type="match status" value="1"/>
</dbReference>
<dbReference type="Gene3D" id="6.10.340.10">
    <property type="match status" value="1"/>
</dbReference>
<dbReference type="Gene3D" id="3.30.565.10">
    <property type="entry name" value="Histidine kinase-like ATPase, C-terminal domain"/>
    <property type="match status" value="1"/>
</dbReference>
<dbReference type="Gene3D" id="3.30.450.20">
    <property type="entry name" value="PAS domain"/>
    <property type="match status" value="1"/>
</dbReference>
<dbReference type="InterPro" id="IPR003660">
    <property type="entry name" value="HAMP_dom"/>
</dbReference>
<dbReference type="InterPro" id="IPR036890">
    <property type="entry name" value="HATPase_C_sf"/>
</dbReference>
<dbReference type="InterPro" id="IPR005467">
    <property type="entry name" value="His_kinase_dom"/>
</dbReference>
<dbReference type="InterPro" id="IPR003661">
    <property type="entry name" value="HisK_dim/P_dom"/>
</dbReference>
<dbReference type="InterPro" id="IPR036097">
    <property type="entry name" value="HisK_dim/P_sf"/>
</dbReference>
<dbReference type="InterPro" id="IPR000014">
    <property type="entry name" value="PAS"/>
</dbReference>
<dbReference type="InterPro" id="IPR035965">
    <property type="entry name" value="PAS-like_dom_sf"/>
</dbReference>
<dbReference type="InterPro" id="IPR013767">
    <property type="entry name" value="PAS_fold"/>
</dbReference>
<dbReference type="InterPro" id="IPR050736">
    <property type="entry name" value="Sensor_HK_Regulatory"/>
</dbReference>
<dbReference type="InterPro" id="IPR004358">
    <property type="entry name" value="Sig_transdc_His_kin-like_C"/>
</dbReference>
<dbReference type="NCBIfam" id="TIGR00229">
    <property type="entry name" value="sensory_box"/>
    <property type="match status" value="1"/>
</dbReference>
<dbReference type="PANTHER" id="PTHR43711:SF13">
    <property type="entry name" value="DRUG SENSORY PROTEIN A"/>
    <property type="match status" value="1"/>
</dbReference>
<dbReference type="PANTHER" id="PTHR43711">
    <property type="entry name" value="TWO-COMPONENT HISTIDINE KINASE"/>
    <property type="match status" value="1"/>
</dbReference>
<dbReference type="Pfam" id="PF00672">
    <property type="entry name" value="HAMP"/>
    <property type="match status" value="1"/>
</dbReference>
<dbReference type="Pfam" id="PF02518">
    <property type="entry name" value="HATPase_c"/>
    <property type="match status" value="1"/>
</dbReference>
<dbReference type="Pfam" id="PF00512">
    <property type="entry name" value="HisKA"/>
    <property type="match status" value="1"/>
</dbReference>
<dbReference type="Pfam" id="PF00989">
    <property type="entry name" value="PAS"/>
    <property type="match status" value="1"/>
</dbReference>
<dbReference type="PRINTS" id="PR00344">
    <property type="entry name" value="BCTRLSENSOR"/>
</dbReference>
<dbReference type="SMART" id="SM00304">
    <property type="entry name" value="HAMP"/>
    <property type="match status" value="1"/>
</dbReference>
<dbReference type="SMART" id="SM00387">
    <property type="entry name" value="HATPase_c"/>
    <property type="match status" value="1"/>
</dbReference>
<dbReference type="SMART" id="SM00388">
    <property type="entry name" value="HisKA"/>
    <property type="match status" value="1"/>
</dbReference>
<dbReference type="SMART" id="SM00091">
    <property type="entry name" value="PAS"/>
    <property type="match status" value="1"/>
</dbReference>
<dbReference type="SUPFAM" id="SSF55874">
    <property type="entry name" value="ATPase domain of HSP90 chaperone/DNA topoisomerase II/histidine kinase"/>
    <property type="match status" value="1"/>
</dbReference>
<dbReference type="SUPFAM" id="SSF158472">
    <property type="entry name" value="HAMP domain-like"/>
    <property type="match status" value="1"/>
</dbReference>
<dbReference type="SUPFAM" id="SSF47384">
    <property type="entry name" value="Homodimeric domain of signal transducing histidine kinase"/>
    <property type="match status" value="1"/>
</dbReference>
<dbReference type="SUPFAM" id="SSF55785">
    <property type="entry name" value="PYP-like sensor domain (PAS domain)"/>
    <property type="match status" value="1"/>
</dbReference>
<dbReference type="PROSITE" id="PS50885">
    <property type="entry name" value="HAMP"/>
    <property type="match status" value="1"/>
</dbReference>
<dbReference type="PROSITE" id="PS50109">
    <property type="entry name" value="HIS_KIN"/>
    <property type="match status" value="1"/>
</dbReference>
<dbReference type="PROSITE" id="PS50112">
    <property type="entry name" value="PAS"/>
    <property type="match status" value="1"/>
</dbReference>